<proteinExistence type="inferred from homology"/>
<sequence length="875" mass="96331">MSKSTAEIRQAFLDFFHSKGHQVVSSSTLVPNNDPTLLFTNAGMNQFKDVFLGLDKRAYSRATTSQRCVRAGGKHNDLENVGYTARHHTFFEMLGNFSFGDYFKHDAINFAWELLTSEQWFNLPKEKLWVTVYETDDEAYNIWANEVGVPHERIIRIGDNKGGAFASDNFWQMGDTGPCGPCSEIFFDHGDHIWGGPPGSAEEDGDRYIEIWNIVFMQFNRQSDGTMLPLPKPSVDTGMGLERIAAVLQHVNSNYEIDLFRDLIAAVADVTGATDLSSKSLRVIADHIRSCAFLISDGVIPSNENRGYVLRRIIRRAIRHGNMLGAKETFFYKLVAPLIAVMGPAAAELKQQQAMVEQVLKTEEEQFARTLERGLALLDDELSKLTGDTLDGETAFRLYDTYGFPVDLTADVCRERNLKVDEAGFEQAMEAQRRRARESSGFGADYNSLIRVDSASQFSGYDHVQQHATVTALFRNGEAVDEIHAGEEAVVVLNRTPFYGESGGQVGDKGELKNATATFSVTDTQKYGQAIGHVGILTTGTLRVNHSVEALVDVVRRNRIRLNHSATHLLHAALRNVLGEHVAQKGSLVNDKYLRFDFSHFEAMKPEQIRLVEDLVNEQIRRNMPVQTEVMELDAAKEKGAMALFGEKYDDQVRVLTMGDFSTELCGGTHASRTGDIGLFRILTESGTAAGIRRIEAVTGEGAIALLHQQSDLLQDVAHLVKGDIHNLADKVRAVLDRSKMLERELQQLKDQQAAQESASLSSSAKLINGVKLLVSQLDNVEPKMLRTMVDDLKNQLGSAIIVLATTADDKVSLIVGVTKDLTGKVKAGELIADIAQQVGGKGGGRPDMAQAGGTDVQALPAALASVEAWVASRM</sequence>
<reference key="1">
    <citation type="journal article" date="2006" name="J. Bacteriol.">
        <title>Complete genome sequence of Yersinia pestis strains Antiqua and Nepal516: evidence of gene reduction in an emerging pathogen.</title>
        <authorList>
            <person name="Chain P.S.G."/>
            <person name="Hu P."/>
            <person name="Malfatti S.A."/>
            <person name="Radnedge L."/>
            <person name="Larimer F."/>
            <person name="Vergez L.M."/>
            <person name="Worsham P."/>
            <person name="Chu M.C."/>
            <person name="Andersen G.L."/>
        </authorList>
    </citation>
    <scope>NUCLEOTIDE SEQUENCE [LARGE SCALE GENOMIC DNA]</scope>
    <source>
        <strain>Nepal516</strain>
    </source>
</reference>
<reference key="2">
    <citation type="submission" date="2009-04" db="EMBL/GenBank/DDBJ databases">
        <title>Yersinia pestis Nepal516A whole genome shotgun sequencing project.</title>
        <authorList>
            <person name="Plunkett G. III"/>
            <person name="Anderson B.D."/>
            <person name="Baumler D.J."/>
            <person name="Burland V."/>
            <person name="Cabot E.L."/>
            <person name="Glasner J.D."/>
            <person name="Mau B."/>
            <person name="Neeno-Eckwall E."/>
            <person name="Perna N.T."/>
            <person name="Munk A.C."/>
            <person name="Tapia R."/>
            <person name="Green L.D."/>
            <person name="Rogers Y.C."/>
            <person name="Detter J.C."/>
            <person name="Bruce D.C."/>
            <person name="Brettin T.S."/>
        </authorList>
    </citation>
    <scope>NUCLEOTIDE SEQUENCE [LARGE SCALE GENOMIC DNA]</scope>
    <source>
        <strain>Nepal516</strain>
    </source>
</reference>
<organism>
    <name type="scientific">Yersinia pestis bv. Antiqua (strain Nepal516)</name>
    <dbReference type="NCBI Taxonomy" id="377628"/>
    <lineage>
        <taxon>Bacteria</taxon>
        <taxon>Pseudomonadati</taxon>
        <taxon>Pseudomonadota</taxon>
        <taxon>Gammaproteobacteria</taxon>
        <taxon>Enterobacterales</taxon>
        <taxon>Yersiniaceae</taxon>
        <taxon>Yersinia</taxon>
    </lineage>
</organism>
<accession>Q1CLK9</accession>
<accession>C4GPY2</accession>
<protein>
    <recommendedName>
        <fullName evidence="1">Alanine--tRNA ligase</fullName>
        <ecNumber evidence="1">6.1.1.7</ecNumber>
    </recommendedName>
    <alternativeName>
        <fullName evidence="1">Alanyl-tRNA synthetase</fullName>
        <shortName evidence="1">AlaRS</shortName>
    </alternativeName>
</protein>
<evidence type="ECO:0000255" key="1">
    <source>
        <dbReference type="HAMAP-Rule" id="MF_00036"/>
    </source>
</evidence>
<comment type="function">
    <text evidence="1">Catalyzes the attachment of alanine to tRNA(Ala) in a two-step reaction: alanine is first activated by ATP to form Ala-AMP and then transferred to the acceptor end of tRNA(Ala). Also edits incorrectly charged Ser-tRNA(Ala) and Gly-tRNA(Ala) via its editing domain.</text>
</comment>
<comment type="catalytic activity">
    <reaction evidence="1">
        <text>tRNA(Ala) + L-alanine + ATP = L-alanyl-tRNA(Ala) + AMP + diphosphate</text>
        <dbReference type="Rhea" id="RHEA:12540"/>
        <dbReference type="Rhea" id="RHEA-COMP:9657"/>
        <dbReference type="Rhea" id="RHEA-COMP:9923"/>
        <dbReference type="ChEBI" id="CHEBI:30616"/>
        <dbReference type="ChEBI" id="CHEBI:33019"/>
        <dbReference type="ChEBI" id="CHEBI:57972"/>
        <dbReference type="ChEBI" id="CHEBI:78442"/>
        <dbReference type="ChEBI" id="CHEBI:78497"/>
        <dbReference type="ChEBI" id="CHEBI:456215"/>
        <dbReference type="EC" id="6.1.1.7"/>
    </reaction>
</comment>
<comment type="cofactor">
    <cofactor evidence="1">
        <name>Zn(2+)</name>
        <dbReference type="ChEBI" id="CHEBI:29105"/>
    </cofactor>
    <text evidence="1">Binds 1 zinc ion per subunit.</text>
</comment>
<comment type="subunit">
    <text evidence="1">Homotetramer.</text>
</comment>
<comment type="subcellular location">
    <subcellularLocation>
        <location evidence="1">Cytoplasm</location>
    </subcellularLocation>
</comment>
<comment type="domain">
    <text evidence="1">Consists of three domains; the N-terminal catalytic domain, the editing domain and the C-terminal C-Ala domain. The editing domain removes incorrectly charged amino acids, while the C-Ala domain, along with tRNA(Ala), serves as a bridge to cooperatively bring together the editing and aminoacylation centers thus stimulating deacylation of misacylated tRNAs.</text>
</comment>
<comment type="similarity">
    <text evidence="1">Belongs to the class-II aminoacyl-tRNA synthetase family.</text>
</comment>
<name>SYA_YERPN</name>
<keyword id="KW-0030">Aminoacyl-tRNA synthetase</keyword>
<keyword id="KW-0067">ATP-binding</keyword>
<keyword id="KW-0963">Cytoplasm</keyword>
<keyword id="KW-0436">Ligase</keyword>
<keyword id="KW-0479">Metal-binding</keyword>
<keyword id="KW-0547">Nucleotide-binding</keyword>
<keyword id="KW-0648">Protein biosynthesis</keyword>
<keyword id="KW-0694">RNA-binding</keyword>
<keyword id="KW-0820">tRNA-binding</keyword>
<keyword id="KW-0862">Zinc</keyword>
<gene>
    <name evidence="1" type="primary">alaS</name>
    <name type="ordered locus">YPN_0789</name>
    <name type="ORF">YP516_0841</name>
</gene>
<dbReference type="EC" id="6.1.1.7" evidence="1"/>
<dbReference type="EMBL" id="CP000305">
    <property type="protein sequence ID" value="ABG17121.1"/>
    <property type="molecule type" value="Genomic_DNA"/>
</dbReference>
<dbReference type="EMBL" id="ACNQ01000007">
    <property type="protein sequence ID" value="EEO77988.1"/>
    <property type="molecule type" value="Genomic_DNA"/>
</dbReference>
<dbReference type="RefSeq" id="WP_002209448.1">
    <property type="nucleotide sequence ID" value="NZ_ACNQ01000007.1"/>
</dbReference>
<dbReference type="SMR" id="Q1CLK9"/>
<dbReference type="GeneID" id="57975404"/>
<dbReference type="KEGG" id="ypn:YPN_0789"/>
<dbReference type="HOGENOM" id="CLU_004485_1_1_6"/>
<dbReference type="Proteomes" id="UP000008936">
    <property type="component" value="Chromosome"/>
</dbReference>
<dbReference type="GO" id="GO:0005829">
    <property type="term" value="C:cytosol"/>
    <property type="evidence" value="ECO:0007669"/>
    <property type="project" value="TreeGrafter"/>
</dbReference>
<dbReference type="GO" id="GO:0004813">
    <property type="term" value="F:alanine-tRNA ligase activity"/>
    <property type="evidence" value="ECO:0007669"/>
    <property type="project" value="UniProtKB-UniRule"/>
</dbReference>
<dbReference type="GO" id="GO:0002161">
    <property type="term" value="F:aminoacyl-tRNA deacylase activity"/>
    <property type="evidence" value="ECO:0007669"/>
    <property type="project" value="TreeGrafter"/>
</dbReference>
<dbReference type="GO" id="GO:0005524">
    <property type="term" value="F:ATP binding"/>
    <property type="evidence" value="ECO:0007669"/>
    <property type="project" value="UniProtKB-UniRule"/>
</dbReference>
<dbReference type="GO" id="GO:0000049">
    <property type="term" value="F:tRNA binding"/>
    <property type="evidence" value="ECO:0007669"/>
    <property type="project" value="UniProtKB-KW"/>
</dbReference>
<dbReference type="GO" id="GO:0008270">
    <property type="term" value="F:zinc ion binding"/>
    <property type="evidence" value="ECO:0007669"/>
    <property type="project" value="UniProtKB-UniRule"/>
</dbReference>
<dbReference type="GO" id="GO:0006419">
    <property type="term" value="P:alanyl-tRNA aminoacylation"/>
    <property type="evidence" value="ECO:0007669"/>
    <property type="project" value="UniProtKB-UniRule"/>
</dbReference>
<dbReference type="GO" id="GO:0045892">
    <property type="term" value="P:negative regulation of DNA-templated transcription"/>
    <property type="evidence" value="ECO:0007669"/>
    <property type="project" value="TreeGrafter"/>
</dbReference>
<dbReference type="CDD" id="cd00673">
    <property type="entry name" value="AlaRS_core"/>
    <property type="match status" value="1"/>
</dbReference>
<dbReference type="FunFam" id="2.40.30.130:FF:000001">
    <property type="entry name" value="Alanine--tRNA ligase"/>
    <property type="match status" value="1"/>
</dbReference>
<dbReference type="FunFam" id="3.10.310.40:FF:000001">
    <property type="entry name" value="Alanine--tRNA ligase"/>
    <property type="match status" value="1"/>
</dbReference>
<dbReference type="FunFam" id="3.30.54.20:FF:000001">
    <property type="entry name" value="Alanine--tRNA ligase"/>
    <property type="match status" value="1"/>
</dbReference>
<dbReference type="FunFam" id="3.30.930.10:FF:000004">
    <property type="entry name" value="Alanine--tRNA ligase"/>
    <property type="match status" value="1"/>
</dbReference>
<dbReference type="FunFam" id="3.30.980.10:FF:000004">
    <property type="entry name" value="Alanine--tRNA ligase, cytoplasmic"/>
    <property type="match status" value="1"/>
</dbReference>
<dbReference type="Gene3D" id="2.40.30.130">
    <property type="match status" value="1"/>
</dbReference>
<dbReference type="Gene3D" id="3.10.310.40">
    <property type="match status" value="1"/>
</dbReference>
<dbReference type="Gene3D" id="3.30.54.20">
    <property type="match status" value="1"/>
</dbReference>
<dbReference type="Gene3D" id="6.10.250.550">
    <property type="match status" value="1"/>
</dbReference>
<dbReference type="Gene3D" id="3.30.930.10">
    <property type="entry name" value="Bira Bifunctional Protein, Domain 2"/>
    <property type="match status" value="1"/>
</dbReference>
<dbReference type="Gene3D" id="3.30.980.10">
    <property type="entry name" value="Threonyl-trna Synthetase, Chain A, domain 2"/>
    <property type="match status" value="1"/>
</dbReference>
<dbReference type="HAMAP" id="MF_00036_B">
    <property type="entry name" value="Ala_tRNA_synth_B"/>
    <property type="match status" value="1"/>
</dbReference>
<dbReference type="InterPro" id="IPR045864">
    <property type="entry name" value="aa-tRNA-synth_II/BPL/LPL"/>
</dbReference>
<dbReference type="InterPro" id="IPR002318">
    <property type="entry name" value="Ala-tRNA-lgiase_IIc"/>
</dbReference>
<dbReference type="InterPro" id="IPR018162">
    <property type="entry name" value="Ala-tRNA-ligase_IIc_anticod-bd"/>
</dbReference>
<dbReference type="InterPro" id="IPR018165">
    <property type="entry name" value="Ala-tRNA-synth_IIc_core"/>
</dbReference>
<dbReference type="InterPro" id="IPR018164">
    <property type="entry name" value="Ala-tRNA-synth_IIc_N"/>
</dbReference>
<dbReference type="InterPro" id="IPR050058">
    <property type="entry name" value="Ala-tRNA_ligase"/>
</dbReference>
<dbReference type="InterPro" id="IPR023033">
    <property type="entry name" value="Ala_tRNA_ligase_euk/bac"/>
</dbReference>
<dbReference type="InterPro" id="IPR003156">
    <property type="entry name" value="DHHA1_dom"/>
</dbReference>
<dbReference type="InterPro" id="IPR018163">
    <property type="entry name" value="Thr/Ala-tRNA-synth_IIc_edit"/>
</dbReference>
<dbReference type="InterPro" id="IPR009000">
    <property type="entry name" value="Transl_B-barrel_sf"/>
</dbReference>
<dbReference type="InterPro" id="IPR012947">
    <property type="entry name" value="tRNA_SAD"/>
</dbReference>
<dbReference type="NCBIfam" id="TIGR00344">
    <property type="entry name" value="alaS"/>
    <property type="match status" value="1"/>
</dbReference>
<dbReference type="PANTHER" id="PTHR11777:SF9">
    <property type="entry name" value="ALANINE--TRNA LIGASE, CYTOPLASMIC"/>
    <property type="match status" value="1"/>
</dbReference>
<dbReference type="PANTHER" id="PTHR11777">
    <property type="entry name" value="ALANYL-TRNA SYNTHETASE"/>
    <property type="match status" value="1"/>
</dbReference>
<dbReference type="Pfam" id="PF02272">
    <property type="entry name" value="DHHA1"/>
    <property type="match status" value="1"/>
</dbReference>
<dbReference type="Pfam" id="PF01411">
    <property type="entry name" value="tRNA-synt_2c"/>
    <property type="match status" value="1"/>
</dbReference>
<dbReference type="Pfam" id="PF07973">
    <property type="entry name" value="tRNA_SAD"/>
    <property type="match status" value="1"/>
</dbReference>
<dbReference type="PRINTS" id="PR00980">
    <property type="entry name" value="TRNASYNTHALA"/>
</dbReference>
<dbReference type="SMART" id="SM00863">
    <property type="entry name" value="tRNA_SAD"/>
    <property type="match status" value="1"/>
</dbReference>
<dbReference type="SUPFAM" id="SSF55681">
    <property type="entry name" value="Class II aaRS and biotin synthetases"/>
    <property type="match status" value="1"/>
</dbReference>
<dbReference type="SUPFAM" id="SSF101353">
    <property type="entry name" value="Putative anticodon-binding domain of alanyl-tRNA synthetase (AlaRS)"/>
    <property type="match status" value="1"/>
</dbReference>
<dbReference type="SUPFAM" id="SSF55186">
    <property type="entry name" value="ThrRS/AlaRS common domain"/>
    <property type="match status" value="1"/>
</dbReference>
<dbReference type="SUPFAM" id="SSF50447">
    <property type="entry name" value="Translation proteins"/>
    <property type="match status" value="1"/>
</dbReference>
<dbReference type="PROSITE" id="PS50860">
    <property type="entry name" value="AA_TRNA_LIGASE_II_ALA"/>
    <property type="match status" value="1"/>
</dbReference>
<feature type="chain" id="PRO_0000347873" description="Alanine--tRNA ligase">
    <location>
        <begin position="1"/>
        <end position="875"/>
    </location>
</feature>
<feature type="binding site" evidence="1">
    <location>
        <position position="564"/>
    </location>
    <ligand>
        <name>Zn(2+)</name>
        <dbReference type="ChEBI" id="CHEBI:29105"/>
    </ligand>
</feature>
<feature type="binding site" evidence="1">
    <location>
        <position position="568"/>
    </location>
    <ligand>
        <name>Zn(2+)</name>
        <dbReference type="ChEBI" id="CHEBI:29105"/>
    </ligand>
</feature>
<feature type="binding site" evidence="1">
    <location>
        <position position="666"/>
    </location>
    <ligand>
        <name>Zn(2+)</name>
        <dbReference type="ChEBI" id="CHEBI:29105"/>
    </ligand>
</feature>
<feature type="binding site" evidence="1">
    <location>
        <position position="670"/>
    </location>
    <ligand>
        <name>Zn(2+)</name>
        <dbReference type="ChEBI" id="CHEBI:29105"/>
    </ligand>
</feature>